<name>SODC4_DICDI</name>
<proteinExistence type="evidence at transcript level"/>
<evidence type="ECO:0000250" key="1"/>
<evidence type="ECO:0000269" key="2">
    <source>
    </source>
</evidence>
<evidence type="ECO:0000305" key="3"/>
<protein>
    <recommendedName>
        <fullName>Superoxide dismutase [Cu-Zn] 4</fullName>
        <ecNumber>1.15.1.1</ecNumber>
    </recommendedName>
</protein>
<sequence length="151" mass="15471">MVKAICVVKGAVVNGTIIFSQENEGSPVYVNGTISGLSGGLHGFHIHEFGDTSNGCLSAGAHFNPFHVEHGGPNSAIRHVGDLGNITSCPSSKVANVLIQDNVISLFGDLSIIGRTLVVHENQDDLGLGGNLSKTTGNAGARVACGILAKI</sequence>
<reference key="1">
    <citation type="journal article" date="2005" name="Nature">
        <title>The genome of the social amoeba Dictyostelium discoideum.</title>
        <authorList>
            <person name="Eichinger L."/>
            <person name="Pachebat J.A."/>
            <person name="Gloeckner G."/>
            <person name="Rajandream M.A."/>
            <person name="Sucgang R."/>
            <person name="Berriman M."/>
            <person name="Song J."/>
            <person name="Olsen R."/>
            <person name="Szafranski K."/>
            <person name="Xu Q."/>
            <person name="Tunggal B."/>
            <person name="Kummerfeld S."/>
            <person name="Madera M."/>
            <person name="Konfortov B.A."/>
            <person name="Rivero F."/>
            <person name="Bankier A.T."/>
            <person name="Lehmann R."/>
            <person name="Hamlin N."/>
            <person name="Davies R."/>
            <person name="Gaudet P."/>
            <person name="Fey P."/>
            <person name="Pilcher K."/>
            <person name="Chen G."/>
            <person name="Saunders D."/>
            <person name="Sodergren E.J."/>
            <person name="Davis P."/>
            <person name="Kerhornou A."/>
            <person name="Nie X."/>
            <person name="Hall N."/>
            <person name="Anjard C."/>
            <person name="Hemphill L."/>
            <person name="Bason N."/>
            <person name="Farbrother P."/>
            <person name="Desany B."/>
            <person name="Just E."/>
            <person name="Morio T."/>
            <person name="Rost R."/>
            <person name="Churcher C.M."/>
            <person name="Cooper J."/>
            <person name="Haydock S."/>
            <person name="van Driessche N."/>
            <person name="Cronin A."/>
            <person name="Goodhead I."/>
            <person name="Muzny D.M."/>
            <person name="Mourier T."/>
            <person name="Pain A."/>
            <person name="Lu M."/>
            <person name="Harper D."/>
            <person name="Lindsay R."/>
            <person name="Hauser H."/>
            <person name="James K.D."/>
            <person name="Quiles M."/>
            <person name="Madan Babu M."/>
            <person name="Saito T."/>
            <person name="Buchrieser C."/>
            <person name="Wardroper A."/>
            <person name="Felder M."/>
            <person name="Thangavelu M."/>
            <person name="Johnson D."/>
            <person name="Knights A."/>
            <person name="Loulseged H."/>
            <person name="Mungall K.L."/>
            <person name="Oliver K."/>
            <person name="Price C."/>
            <person name="Quail M.A."/>
            <person name="Urushihara H."/>
            <person name="Hernandez J."/>
            <person name="Rabbinowitsch E."/>
            <person name="Steffen D."/>
            <person name="Sanders M."/>
            <person name="Ma J."/>
            <person name="Kohara Y."/>
            <person name="Sharp S."/>
            <person name="Simmonds M.N."/>
            <person name="Spiegler S."/>
            <person name="Tivey A."/>
            <person name="Sugano S."/>
            <person name="White B."/>
            <person name="Walker D."/>
            <person name="Woodward J.R."/>
            <person name="Winckler T."/>
            <person name="Tanaka Y."/>
            <person name="Shaulsky G."/>
            <person name="Schleicher M."/>
            <person name="Weinstock G.M."/>
            <person name="Rosenthal A."/>
            <person name="Cox E.C."/>
            <person name="Chisholm R.L."/>
            <person name="Gibbs R.A."/>
            <person name="Loomis W.F."/>
            <person name="Platzer M."/>
            <person name="Kay R.R."/>
            <person name="Williams J.G."/>
            <person name="Dear P.H."/>
            <person name="Noegel A.A."/>
            <person name="Barrell B.G."/>
            <person name="Kuspa A."/>
        </authorList>
    </citation>
    <scope>NUCLEOTIDE SEQUENCE [LARGE SCALE GENOMIC DNA]</scope>
    <source>
        <strain>AX4</strain>
    </source>
</reference>
<reference key="2">
    <citation type="journal article" date="2002" name="Biol. Pharm. Bull.">
        <title>Analysis of the gene encoding copper/zinc superoxide dismutase homolog in Dictyostelium discoideum.</title>
        <authorList>
            <person name="Akaza Y."/>
            <person name="Tsuji A."/>
            <person name="Yasukawa H."/>
        </authorList>
    </citation>
    <scope>FUNCTION</scope>
    <scope>DEVELOPMENTAL STAGE</scope>
</reference>
<comment type="function">
    <text evidence="1 2">Destroys radicals which are normally produced within the cells and which are toxic to biological systems (By similarity). Protects spores from cellular damage caused by UV LIGHT.</text>
</comment>
<comment type="catalytic activity">
    <reaction>
        <text>2 superoxide + 2 H(+) = H2O2 + O2</text>
        <dbReference type="Rhea" id="RHEA:20696"/>
        <dbReference type="ChEBI" id="CHEBI:15378"/>
        <dbReference type="ChEBI" id="CHEBI:15379"/>
        <dbReference type="ChEBI" id="CHEBI:16240"/>
        <dbReference type="ChEBI" id="CHEBI:18421"/>
        <dbReference type="EC" id="1.15.1.1"/>
    </reaction>
</comment>
<comment type="cofactor">
    <cofactor evidence="1">
        <name>Cu cation</name>
        <dbReference type="ChEBI" id="CHEBI:23378"/>
    </cofactor>
    <text evidence="1">Binds 1 copper ion per subunit.</text>
</comment>
<comment type="cofactor">
    <cofactor evidence="1">
        <name>Zn(2+)</name>
        <dbReference type="ChEBI" id="CHEBI:29105"/>
    </cofactor>
    <text evidence="1">Binds 1 zinc ion per subunit.</text>
</comment>
<comment type="subunit">
    <text evidence="1">Homodimer.</text>
</comment>
<comment type="subcellular location">
    <subcellularLocation>
        <location evidence="1">Cytoplasm</location>
    </subcellularLocation>
</comment>
<comment type="developmental stage">
    <text evidence="2">Expressed at late-developmental stages. Spore cell specific.</text>
</comment>
<comment type="similarity">
    <text evidence="3">Belongs to the Cu-Zn superoxide dismutase family.</text>
</comment>
<accession>Q54TU5</accession>
<accession>Q52KB3</accession>
<feature type="chain" id="PRO_0000311821" description="Superoxide dismutase [Cu-Zn] 4">
    <location>
        <begin position="1"/>
        <end position="151"/>
    </location>
</feature>
<feature type="binding site" evidence="1">
    <location>
        <position position="45"/>
    </location>
    <ligand>
        <name>Cu cation</name>
        <dbReference type="ChEBI" id="CHEBI:23378"/>
        <note>catalytic</note>
    </ligand>
</feature>
<feature type="binding site" evidence="1">
    <location>
        <position position="47"/>
    </location>
    <ligand>
        <name>Cu cation</name>
        <dbReference type="ChEBI" id="CHEBI:23378"/>
        <note>catalytic</note>
    </ligand>
</feature>
<feature type="binding site" evidence="1">
    <location>
        <position position="62"/>
    </location>
    <ligand>
        <name>Cu cation</name>
        <dbReference type="ChEBI" id="CHEBI:23378"/>
        <note>catalytic</note>
    </ligand>
</feature>
<feature type="binding site" evidence="1">
    <location>
        <position position="62"/>
    </location>
    <ligand>
        <name>Zn(2+)</name>
        <dbReference type="ChEBI" id="CHEBI:29105"/>
        <note>structural</note>
    </ligand>
</feature>
<feature type="binding site" evidence="1">
    <location>
        <position position="70"/>
    </location>
    <ligand>
        <name>Zn(2+)</name>
        <dbReference type="ChEBI" id="CHEBI:29105"/>
        <note>structural</note>
    </ligand>
</feature>
<feature type="binding site" evidence="1">
    <location>
        <position position="79"/>
    </location>
    <ligand>
        <name>Zn(2+)</name>
        <dbReference type="ChEBI" id="CHEBI:29105"/>
        <note>structural</note>
    </ligand>
</feature>
<feature type="binding site" evidence="1">
    <location>
        <position position="82"/>
    </location>
    <ligand>
        <name>Zn(2+)</name>
        <dbReference type="ChEBI" id="CHEBI:29105"/>
        <note>structural</note>
    </ligand>
</feature>
<feature type="binding site" evidence="1">
    <location>
        <position position="120"/>
    </location>
    <ligand>
        <name>Cu cation</name>
        <dbReference type="ChEBI" id="CHEBI:23378"/>
        <note>catalytic</note>
    </ligand>
</feature>
<feature type="disulfide bond" evidence="1">
    <location>
        <begin position="56"/>
        <end position="145"/>
    </location>
</feature>
<dbReference type="EC" id="1.15.1.1"/>
<dbReference type="EMBL" id="AAFI02000041">
    <property type="protein sequence ID" value="EAL66728.1"/>
    <property type="molecule type" value="Genomic_DNA"/>
</dbReference>
<dbReference type="EMBL" id="BR000217">
    <property type="protein sequence ID" value="FAA00019.1"/>
    <property type="molecule type" value="mRNA"/>
</dbReference>
<dbReference type="RefSeq" id="XP_640716.1">
    <property type="nucleotide sequence ID" value="XM_635624.1"/>
</dbReference>
<dbReference type="SMR" id="Q54TU5"/>
<dbReference type="FunCoup" id="Q54TU5">
    <property type="interactions" value="48"/>
</dbReference>
<dbReference type="STRING" id="44689.Q54TU5"/>
<dbReference type="PaxDb" id="44689-DDB0232182"/>
<dbReference type="EnsemblProtists" id="EAL66728">
    <property type="protein sequence ID" value="EAL66728"/>
    <property type="gene ID" value="DDB_G0281493"/>
</dbReference>
<dbReference type="GeneID" id="8623104"/>
<dbReference type="KEGG" id="ddi:DDB_G0281493"/>
<dbReference type="dictyBase" id="DDB_G0281493">
    <property type="gene designation" value="sodD"/>
</dbReference>
<dbReference type="VEuPathDB" id="AmoebaDB:DDB_G0281493"/>
<dbReference type="eggNOG" id="KOG0441">
    <property type="taxonomic scope" value="Eukaryota"/>
</dbReference>
<dbReference type="HOGENOM" id="CLU_056632_4_1_1"/>
<dbReference type="InParanoid" id="Q54TU5"/>
<dbReference type="OMA" id="CGIILET"/>
<dbReference type="PhylomeDB" id="Q54TU5"/>
<dbReference type="Reactome" id="R-DDI-3299685">
    <property type="pathway name" value="Detoxification of Reactive Oxygen Species"/>
</dbReference>
<dbReference type="PRO" id="PR:Q54TU5"/>
<dbReference type="Proteomes" id="UP000002195">
    <property type="component" value="Chromosome 3"/>
</dbReference>
<dbReference type="GO" id="GO:0005737">
    <property type="term" value="C:cytoplasm"/>
    <property type="evidence" value="ECO:0007669"/>
    <property type="project" value="UniProtKB-SubCell"/>
</dbReference>
<dbReference type="GO" id="GO:0005507">
    <property type="term" value="F:copper ion binding"/>
    <property type="evidence" value="ECO:0000318"/>
    <property type="project" value="GO_Central"/>
</dbReference>
<dbReference type="GO" id="GO:0004784">
    <property type="term" value="F:superoxide dismutase activity"/>
    <property type="evidence" value="ECO:0000318"/>
    <property type="project" value="GO_Central"/>
</dbReference>
<dbReference type="GO" id="GO:0019430">
    <property type="term" value="P:removal of superoxide radicals"/>
    <property type="evidence" value="ECO:0000318"/>
    <property type="project" value="GO_Central"/>
</dbReference>
<dbReference type="GO" id="GO:0009411">
    <property type="term" value="P:response to UV"/>
    <property type="evidence" value="ECO:0000315"/>
    <property type="project" value="dictyBase"/>
</dbReference>
<dbReference type="CDD" id="cd00305">
    <property type="entry name" value="Cu-Zn_Superoxide_Dismutase"/>
    <property type="match status" value="1"/>
</dbReference>
<dbReference type="FunFam" id="2.60.40.200:FF:000001">
    <property type="entry name" value="Superoxide dismutase [Cu-Zn]"/>
    <property type="match status" value="1"/>
</dbReference>
<dbReference type="Gene3D" id="2.60.40.200">
    <property type="entry name" value="Superoxide dismutase, copper/zinc binding domain"/>
    <property type="match status" value="1"/>
</dbReference>
<dbReference type="InterPro" id="IPR036423">
    <property type="entry name" value="SOD-like_Cu/Zn_dom_sf"/>
</dbReference>
<dbReference type="InterPro" id="IPR024134">
    <property type="entry name" value="SOD_Cu/Zn_/chaperone"/>
</dbReference>
<dbReference type="InterPro" id="IPR018152">
    <property type="entry name" value="SOD_Cu/Zn_BS"/>
</dbReference>
<dbReference type="InterPro" id="IPR001424">
    <property type="entry name" value="SOD_Cu_Zn_dom"/>
</dbReference>
<dbReference type="PANTHER" id="PTHR10003">
    <property type="entry name" value="SUPEROXIDE DISMUTASE CU-ZN -RELATED"/>
    <property type="match status" value="1"/>
</dbReference>
<dbReference type="Pfam" id="PF00080">
    <property type="entry name" value="Sod_Cu"/>
    <property type="match status" value="1"/>
</dbReference>
<dbReference type="PRINTS" id="PR00068">
    <property type="entry name" value="CUZNDISMTASE"/>
</dbReference>
<dbReference type="SUPFAM" id="SSF49329">
    <property type="entry name" value="Cu,Zn superoxide dismutase-like"/>
    <property type="match status" value="1"/>
</dbReference>
<dbReference type="PROSITE" id="PS00087">
    <property type="entry name" value="SOD_CU_ZN_1"/>
    <property type="match status" value="1"/>
</dbReference>
<gene>
    <name type="primary">sodD</name>
    <name type="ORF">DDB_G0281493</name>
</gene>
<organism>
    <name type="scientific">Dictyostelium discoideum</name>
    <name type="common">Social amoeba</name>
    <dbReference type="NCBI Taxonomy" id="44689"/>
    <lineage>
        <taxon>Eukaryota</taxon>
        <taxon>Amoebozoa</taxon>
        <taxon>Evosea</taxon>
        <taxon>Eumycetozoa</taxon>
        <taxon>Dictyostelia</taxon>
        <taxon>Dictyosteliales</taxon>
        <taxon>Dictyosteliaceae</taxon>
        <taxon>Dictyostelium</taxon>
    </lineage>
</organism>
<keyword id="KW-0049">Antioxidant</keyword>
<keyword id="KW-0186">Copper</keyword>
<keyword id="KW-0963">Cytoplasm</keyword>
<keyword id="KW-1015">Disulfide bond</keyword>
<keyword id="KW-0479">Metal-binding</keyword>
<keyword id="KW-0560">Oxidoreductase</keyword>
<keyword id="KW-1185">Reference proteome</keyword>
<keyword id="KW-0862">Zinc</keyword>